<accession>B7V0P4</accession>
<dbReference type="EC" id="6.1.1.14" evidence="1"/>
<dbReference type="EMBL" id="FM209186">
    <property type="protein sequence ID" value="CAW24736.1"/>
    <property type="molecule type" value="Genomic_DNA"/>
</dbReference>
<dbReference type="RefSeq" id="WP_003097276.1">
    <property type="nucleotide sequence ID" value="NC_011770.1"/>
</dbReference>
<dbReference type="SMR" id="B7V0P4"/>
<dbReference type="KEGG" id="pag:PLES_00081"/>
<dbReference type="HOGENOM" id="CLU_057066_1_0_6"/>
<dbReference type="GO" id="GO:0005829">
    <property type="term" value="C:cytosol"/>
    <property type="evidence" value="ECO:0007669"/>
    <property type="project" value="TreeGrafter"/>
</dbReference>
<dbReference type="GO" id="GO:0005524">
    <property type="term" value="F:ATP binding"/>
    <property type="evidence" value="ECO:0007669"/>
    <property type="project" value="UniProtKB-UniRule"/>
</dbReference>
<dbReference type="GO" id="GO:0004820">
    <property type="term" value="F:glycine-tRNA ligase activity"/>
    <property type="evidence" value="ECO:0007669"/>
    <property type="project" value="UniProtKB-UniRule"/>
</dbReference>
<dbReference type="GO" id="GO:0006426">
    <property type="term" value="P:glycyl-tRNA aminoacylation"/>
    <property type="evidence" value="ECO:0007669"/>
    <property type="project" value="UniProtKB-UniRule"/>
</dbReference>
<dbReference type="CDD" id="cd00733">
    <property type="entry name" value="GlyRS_alpha_core"/>
    <property type="match status" value="1"/>
</dbReference>
<dbReference type="FunFam" id="3.30.930.10:FF:000006">
    <property type="entry name" value="Glycine--tRNA ligase alpha subunit"/>
    <property type="match status" value="1"/>
</dbReference>
<dbReference type="Gene3D" id="3.30.930.10">
    <property type="entry name" value="Bira Bifunctional Protein, Domain 2"/>
    <property type="match status" value="1"/>
</dbReference>
<dbReference type="Gene3D" id="1.20.58.180">
    <property type="entry name" value="Class II aaRS and biotin synthetases, domain 2"/>
    <property type="match status" value="1"/>
</dbReference>
<dbReference type="HAMAP" id="MF_00254">
    <property type="entry name" value="Gly_tRNA_synth_alpha"/>
    <property type="match status" value="1"/>
</dbReference>
<dbReference type="InterPro" id="IPR045864">
    <property type="entry name" value="aa-tRNA-synth_II/BPL/LPL"/>
</dbReference>
<dbReference type="InterPro" id="IPR006194">
    <property type="entry name" value="Gly-tRNA-synth_heterodimer"/>
</dbReference>
<dbReference type="InterPro" id="IPR002310">
    <property type="entry name" value="Gly-tRNA_ligase_asu"/>
</dbReference>
<dbReference type="NCBIfam" id="TIGR00388">
    <property type="entry name" value="glyQ"/>
    <property type="match status" value="1"/>
</dbReference>
<dbReference type="NCBIfam" id="NF006827">
    <property type="entry name" value="PRK09348.1"/>
    <property type="match status" value="1"/>
</dbReference>
<dbReference type="PANTHER" id="PTHR30075:SF2">
    <property type="entry name" value="GLYCINE--TRNA LIGASE, CHLOROPLASTIC_MITOCHONDRIAL 2"/>
    <property type="match status" value="1"/>
</dbReference>
<dbReference type="PANTHER" id="PTHR30075">
    <property type="entry name" value="GLYCYL-TRNA SYNTHETASE"/>
    <property type="match status" value="1"/>
</dbReference>
<dbReference type="Pfam" id="PF02091">
    <property type="entry name" value="tRNA-synt_2e"/>
    <property type="match status" value="1"/>
</dbReference>
<dbReference type="PRINTS" id="PR01044">
    <property type="entry name" value="TRNASYNTHGA"/>
</dbReference>
<dbReference type="SUPFAM" id="SSF55681">
    <property type="entry name" value="Class II aaRS and biotin synthetases"/>
    <property type="match status" value="1"/>
</dbReference>
<dbReference type="PROSITE" id="PS50861">
    <property type="entry name" value="AA_TRNA_LIGASE_II_GLYAB"/>
    <property type="match status" value="1"/>
</dbReference>
<feature type="chain" id="PRO_1000197210" description="Glycine--tRNA ligase alpha subunit">
    <location>
        <begin position="1"/>
        <end position="315"/>
    </location>
</feature>
<reference key="1">
    <citation type="journal article" date="2009" name="Genome Res.">
        <title>Newly introduced genomic prophage islands are critical determinants of in vivo competitiveness in the Liverpool epidemic strain of Pseudomonas aeruginosa.</title>
        <authorList>
            <person name="Winstanley C."/>
            <person name="Langille M.G.I."/>
            <person name="Fothergill J.L."/>
            <person name="Kukavica-Ibrulj I."/>
            <person name="Paradis-Bleau C."/>
            <person name="Sanschagrin F."/>
            <person name="Thomson N.R."/>
            <person name="Winsor G.L."/>
            <person name="Quail M.A."/>
            <person name="Lennard N."/>
            <person name="Bignell A."/>
            <person name="Clarke L."/>
            <person name="Seeger K."/>
            <person name="Saunders D."/>
            <person name="Harris D."/>
            <person name="Parkhill J."/>
            <person name="Hancock R.E.W."/>
            <person name="Brinkman F.S.L."/>
            <person name="Levesque R.C."/>
        </authorList>
    </citation>
    <scope>NUCLEOTIDE SEQUENCE [LARGE SCALE GENOMIC DNA]</scope>
    <source>
        <strain>LESB58</strain>
    </source>
</reference>
<gene>
    <name evidence="1" type="primary">glyQ</name>
    <name type="ordered locus">PLES_00081</name>
</gene>
<protein>
    <recommendedName>
        <fullName evidence="1">Glycine--tRNA ligase alpha subunit</fullName>
        <ecNumber evidence="1">6.1.1.14</ecNumber>
    </recommendedName>
    <alternativeName>
        <fullName evidence="1">Glycyl-tRNA synthetase alpha subunit</fullName>
        <shortName evidence="1">GlyRS</shortName>
    </alternativeName>
</protein>
<name>SYGA_PSEA8</name>
<proteinExistence type="inferred from homology"/>
<organism>
    <name type="scientific">Pseudomonas aeruginosa (strain LESB58)</name>
    <dbReference type="NCBI Taxonomy" id="557722"/>
    <lineage>
        <taxon>Bacteria</taxon>
        <taxon>Pseudomonadati</taxon>
        <taxon>Pseudomonadota</taxon>
        <taxon>Gammaproteobacteria</taxon>
        <taxon>Pseudomonadales</taxon>
        <taxon>Pseudomonadaceae</taxon>
        <taxon>Pseudomonas</taxon>
    </lineage>
</organism>
<comment type="catalytic activity">
    <reaction evidence="1">
        <text>tRNA(Gly) + glycine + ATP = glycyl-tRNA(Gly) + AMP + diphosphate</text>
        <dbReference type="Rhea" id="RHEA:16013"/>
        <dbReference type="Rhea" id="RHEA-COMP:9664"/>
        <dbReference type="Rhea" id="RHEA-COMP:9683"/>
        <dbReference type="ChEBI" id="CHEBI:30616"/>
        <dbReference type="ChEBI" id="CHEBI:33019"/>
        <dbReference type="ChEBI" id="CHEBI:57305"/>
        <dbReference type="ChEBI" id="CHEBI:78442"/>
        <dbReference type="ChEBI" id="CHEBI:78522"/>
        <dbReference type="ChEBI" id="CHEBI:456215"/>
        <dbReference type="EC" id="6.1.1.14"/>
    </reaction>
</comment>
<comment type="subunit">
    <text evidence="1">Tetramer of two alpha and two beta subunits.</text>
</comment>
<comment type="subcellular location">
    <subcellularLocation>
        <location evidence="1">Cytoplasm</location>
    </subcellularLocation>
</comment>
<comment type="similarity">
    <text evidence="1">Belongs to the class-II aminoacyl-tRNA synthetase family.</text>
</comment>
<sequence>MSQTTPAVRTFQDLILALQNYWAEQGCVVLQPYDMEVGAGTFHTATFLRAIGPETWNAAYVQPSRRPTDGRYGENPNRLQHYYQFQVVLKPNPENFQELYLGSLKAIGIDPLVHDIRFVEDNWESPTLGAWGLGWEIWLNGMEVTQFTYFQQVGGIECYPVTGEITYGLERLAMYLQGVDSVYDLVWTDGPFGKVTYGDVFHQNEVEQSTFNFEHANVPKLFELFDFYESEANRLIALELPLPTYEMVLKASHTFNLLDARRAISVTERQRYILRVRTLARAVAQSYLQARARLGFPMATPELRDEVLAKLKEAE</sequence>
<evidence type="ECO:0000255" key="1">
    <source>
        <dbReference type="HAMAP-Rule" id="MF_00254"/>
    </source>
</evidence>
<keyword id="KW-0030">Aminoacyl-tRNA synthetase</keyword>
<keyword id="KW-0067">ATP-binding</keyword>
<keyword id="KW-0963">Cytoplasm</keyword>
<keyword id="KW-0436">Ligase</keyword>
<keyword id="KW-0547">Nucleotide-binding</keyword>
<keyword id="KW-0648">Protein biosynthesis</keyword>